<name>GABR1_CAEEL</name>
<dbReference type="EMBL" id="EU729334">
    <property type="protein sequence ID" value="ACE63490.1"/>
    <property type="molecule type" value="mRNA"/>
</dbReference>
<dbReference type="EMBL" id="BX284606">
    <property type="protein sequence ID" value="CCD74420.2"/>
    <property type="molecule type" value="Genomic_DNA"/>
</dbReference>
<dbReference type="EMBL" id="BX284606">
    <property type="protein sequence ID" value="CCD74424.2"/>
    <property type="molecule type" value="Genomic_DNA"/>
</dbReference>
<dbReference type="EMBL" id="BX284606">
    <property type="protein sequence ID" value="CCD74425.2"/>
    <property type="molecule type" value="Genomic_DNA"/>
</dbReference>
<dbReference type="EMBL" id="BX284606">
    <property type="protein sequence ID" value="CTQ87097.1"/>
    <property type="molecule type" value="Genomic_DNA"/>
</dbReference>
<dbReference type="RefSeq" id="NP_001256997.2">
    <molecule id="H2L0Q3-3"/>
    <property type="nucleotide sequence ID" value="NM_001270068.6"/>
</dbReference>
<dbReference type="RefSeq" id="NP_001300386.1">
    <molecule id="H2L0Q3-4"/>
    <property type="nucleotide sequence ID" value="NM_001313457.4"/>
</dbReference>
<dbReference type="RefSeq" id="NP_741740.3">
    <molecule id="H2L0Q3-1"/>
    <property type="nucleotide sequence ID" value="NM_171645.7"/>
</dbReference>
<dbReference type="RefSeq" id="NP_741741.2">
    <molecule id="H2L0Q3-2"/>
    <property type="nucleotide sequence ID" value="NM_171646.6"/>
</dbReference>
<dbReference type="SMR" id="H2L0Q3"/>
<dbReference type="ComplexPortal" id="CPX-1158">
    <property type="entry name" value="GABA-B receptor complex"/>
</dbReference>
<dbReference type="FunCoup" id="H2L0Q3">
    <property type="interactions" value="912"/>
</dbReference>
<dbReference type="STRING" id="6239.Y41G9A.4b.1"/>
<dbReference type="GlyCosmos" id="H2L0Q3">
    <property type="glycosylation" value="5 sites, No reported glycans"/>
</dbReference>
<dbReference type="PaxDb" id="6239-Y41G9A.4b"/>
<dbReference type="EnsemblMetazoa" id="Y41G9A.4a.1">
    <molecule id="H2L0Q3-2"/>
    <property type="protein sequence ID" value="Y41G9A.4a.1"/>
    <property type="gene ID" value="WBGene00021528"/>
</dbReference>
<dbReference type="EnsemblMetazoa" id="Y41G9A.4b.1">
    <molecule id="H2L0Q3-1"/>
    <property type="protein sequence ID" value="Y41G9A.4b.1"/>
    <property type="gene ID" value="WBGene00021528"/>
</dbReference>
<dbReference type="EnsemblMetazoa" id="Y41G9A.4c.1">
    <molecule id="H2L0Q3-3"/>
    <property type="protein sequence ID" value="Y41G9A.4c.1"/>
    <property type="gene ID" value="WBGene00021528"/>
</dbReference>
<dbReference type="EnsemblMetazoa" id="Y41G9A.4e.1">
    <molecule id="H2L0Q3-4"/>
    <property type="protein sequence ID" value="Y41G9A.4e.1"/>
    <property type="gene ID" value="WBGene00021528"/>
</dbReference>
<dbReference type="GeneID" id="189837"/>
<dbReference type="KEGG" id="cel:CELE_Y41G9A.4"/>
<dbReference type="UCSC" id="Y41G9A.4a">
    <property type="organism name" value="c. elegans"/>
</dbReference>
<dbReference type="AGR" id="WB:WBGene00021528"/>
<dbReference type="CTD" id="189837"/>
<dbReference type="WormBase" id="Y41G9A.4a">
    <molecule id="H2L0Q3-2"/>
    <property type="protein sequence ID" value="CE50190"/>
    <property type="gene ID" value="WBGene00021528"/>
    <property type="gene designation" value="gbb-1"/>
</dbReference>
<dbReference type="WormBase" id="Y41G9A.4b">
    <molecule id="H2L0Q3-1"/>
    <property type="protein sequence ID" value="CE50147"/>
    <property type="gene ID" value="WBGene00021528"/>
    <property type="gene designation" value="gbb-1"/>
</dbReference>
<dbReference type="WormBase" id="Y41G9A.4c">
    <molecule id="H2L0Q3-3"/>
    <property type="protein sequence ID" value="CE50293"/>
    <property type="gene ID" value="WBGene00021528"/>
    <property type="gene designation" value="gbb-1"/>
</dbReference>
<dbReference type="WormBase" id="Y41G9A.4e">
    <molecule id="H2L0Q3-4"/>
    <property type="protein sequence ID" value="CE50186"/>
    <property type="gene ID" value="WBGene00021528"/>
    <property type="gene designation" value="gbb-1"/>
</dbReference>
<dbReference type="eggNOG" id="KOG1055">
    <property type="taxonomic scope" value="Eukaryota"/>
</dbReference>
<dbReference type="GeneTree" id="ENSGT00940000157642"/>
<dbReference type="InParanoid" id="H2L0Q3"/>
<dbReference type="OMA" id="WAGGEAC"/>
<dbReference type="OrthoDB" id="17569at2759"/>
<dbReference type="Reactome" id="R-CEL-1296041">
    <property type="pathway name" value="Activation of G protein gated Potassium channels"/>
</dbReference>
<dbReference type="Reactome" id="R-CEL-418594">
    <property type="pathway name" value="G alpha (i) signalling events"/>
</dbReference>
<dbReference type="Reactome" id="R-CEL-420499">
    <property type="pathway name" value="Class C/3 (Metabotropic glutamate/pheromone receptors)"/>
</dbReference>
<dbReference type="Reactome" id="R-CEL-977444">
    <property type="pathway name" value="GABA B receptor activation"/>
</dbReference>
<dbReference type="Reactome" id="R-CEL-997272">
    <property type="pathway name" value="Inhibition of voltage gated Ca2+ channels via Gbeta/gamma subunits"/>
</dbReference>
<dbReference type="PRO" id="PR:H2L0Q3"/>
<dbReference type="Proteomes" id="UP000001940">
    <property type="component" value="Chromosome X"/>
</dbReference>
<dbReference type="Bgee" id="WBGene00021528">
    <property type="expression patterns" value="Expressed in larva and 3 other cell types or tissues"/>
</dbReference>
<dbReference type="ExpressionAtlas" id="H2L0Q3">
    <property type="expression patterns" value="baseline and differential"/>
</dbReference>
<dbReference type="GO" id="GO:1902712">
    <property type="term" value="C:G protein-coupled GABA receptor complex"/>
    <property type="evidence" value="ECO:0000304"/>
    <property type="project" value="UniProtKB"/>
</dbReference>
<dbReference type="GO" id="GO:0038039">
    <property type="term" value="C:G protein-coupled receptor heterodimeric complex"/>
    <property type="evidence" value="ECO:0000318"/>
    <property type="project" value="GO_Central"/>
</dbReference>
<dbReference type="GO" id="GO:0004965">
    <property type="term" value="F:G protein-coupled GABA receptor activity"/>
    <property type="evidence" value="ECO:0000315"/>
    <property type="project" value="UniProtKB"/>
</dbReference>
<dbReference type="GO" id="GO:0007186">
    <property type="term" value="P:G protein-coupled receptor signaling pathway"/>
    <property type="evidence" value="ECO:0000315"/>
    <property type="project" value="UniProtKB"/>
</dbReference>
<dbReference type="GO" id="GO:0007214">
    <property type="term" value="P:gamma-aminobutyric acid signaling pathway"/>
    <property type="evidence" value="ECO:0000318"/>
    <property type="project" value="GO_Central"/>
</dbReference>
<dbReference type="GO" id="GO:0032223">
    <property type="term" value="P:negative regulation of synaptic transmission, cholinergic"/>
    <property type="evidence" value="ECO:0000315"/>
    <property type="project" value="UniProtKB"/>
</dbReference>
<dbReference type="GO" id="GO:0040012">
    <property type="term" value="P:regulation of locomotion"/>
    <property type="evidence" value="ECO:0000315"/>
    <property type="project" value="ComplexPortal"/>
</dbReference>
<dbReference type="GO" id="GO:0009410">
    <property type="term" value="P:response to xenobiotic stimulus"/>
    <property type="evidence" value="ECO:0000315"/>
    <property type="project" value="UniProtKB"/>
</dbReference>
<dbReference type="CDD" id="cd15291">
    <property type="entry name" value="7tmC_GABA-B-R1"/>
    <property type="match status" value="1"/>
</dbReference>
<dbReference type="CDD" id="cd06366">
    <property type="entry name" value="PBP1_GABAb_receptor"/>
    <property type="match status" value="1"/>
</dbReference>
<dbReference type="FunFam" id="3.40.50.2300:FF:000056">
    <property type="entry name" value="Gamma-aminobutyric acid type B receptor subunit 1"/>
    <property type="match status" value="1"/>
</dbReference>
<dbReference type="Gene3D" id="3.40.50.2300">
    <property type="match status" value="2"/>
</dbReference>
<dbReference type="InterPro" id="IPR001828">
    <property type="entry name" value="ANF_lig-bd_rcpt"/>
</dbReference>
<dbReference type="InterPro" id="IPR002455">
    <property type="entry name" value="GPCR3_GABA-B"/>
</dbReference>
<dbReference type="InterPro" id="IPR017978">
    <property type="entry name" value="GPCR_3_C"/>
</dbReference>
<dbReference type="InterPro" id="IPR002456">
    <property type="entry name" value="GPCR_3_GABA_rcpt_B1"/>
</dbReference>
<dbReference type="InterPro" id="IPR028082">
    <property type="entry name" value="Peripla_BP_I"/>
</dbReference>
<dbReference type="PANTHER" id="PTHR10519">
    <property type="entry name" value="GABA-B RECEPTOR"/>
    <property type="match status" value="1"/>
</dbReference>
<dbReference type="PANTHER" id="PTHR10519:SF77">
    <property type="entry name" value="GAMMA-AMINOBUTYRIC ACID TYPE B RECEPTOR SUBUNIT 1"/>
    <property type="match status" value="1"/>
</dbReference>
<dbReference type="Pfam" id="PF00003">
    <property type="entry name" value="7tm_3"/>
    <property type="match status" value="2"/>
</dbReference>
<dbReference type="Pfam" id="PF01094">
    <property type="entry name" value="ANF_receptor"/>
    <property type="match status" value="1"/>
</dbReference>
<dbReference type="PRINTS" id="PR01177">
    <property type="entry name" value="GABAB1RECPTR"/>
</dbReference>
<dbReference type="PRINTS" id="PR01176">
    <property type="entry name" value="GABABRECEPTR"/>
</dbReference>
<dbReference type="SUPFAM" id="SSF53822">
    <property type="entry name" value="Periplasmic binding protein-like I"/>
    <property type="match status" value="1"/>
</dbReference>
<dbReference type="PROSITE" id="PS50259">
    <property type="entry name" value="G_PROTEIN_RECEP_F3_4"/>
    <property type="match status" value="1"/>
</dbReference>
<protein>
    <recommendedName>
        <fullName evidence="9">Gamma-aminobutyric acid type B receptor subunit 1</fullName>
    </recommendedName>
</protein>
<proteinExistence type="evidence at protein level"/>
<accession>H2L0Q3</accession>
<accession>A0A0K3AVQ1</accession>
<accession>B3VBI8</accession>
<accession>B7CED7</accession>
<accession>Q9N502</accession>
<gene>
    <name evidence="14" type="primary">gbb-1</name>
    <name evidence="14" type="ORF">Y41G9A.4</name>
</gene>
<organism evidence="12">
    <name type="scientific">Caenorhabditis elegans</name>
    <dbReference type="NCBI Taxonomy" id="6239"/>
    <lineage>
        <taxon>Eukaryota</taxon>
        <taxon>Metazoa</taxon>
        <taxon>Ecdysozoa</taxon>
        <taxon>Nematoda</taxon>
        <taxon>Chromadorea</taxon>
        <taxon>Rhabditida</taxon>
        <taxon>Rhabditina</taxon>
        <taxon>Rhabditomorpha</taxon>
        <taxon>Rhabditoidea</taxon>
        <taxon>Rhabditidae</taxon>
        <taxon>Peloderinae</taxon>
        <taxon>Caenorhabditis</taxon>
    </lineage>
</organism>
<reference evidence="11" key="1">
    <citation type="journal article" date="2008" name="J. Neurosci.">
        <title>Behavioral impact of neurotransmitter-activated G-protein-coupled receptors: muscarinic and GABAB receptors regulate Caenorhabditis elegans locomotion.</title>
        <authorList>
            <person name="Dittman J.S."/>
            <person name="Kaplan J.M."/>
        </authorList>
    </citation>
    <scope>NUCLEOTIDE SEQUENCE [MRNA] (ISOFORM C)</scope>
    <scope>FUNCTION</scope>
    <scope>SUBUNIT</scope>
    <scope>TISSUE SPECIFICITY</scope>
    <scope>DISRUPTION PHENOTYPE</scope>
</reference>
<reference evidence="12" key="2">
    <citation type="journal article" date="1998" name="Science">
        <title>Genome sequence of the nematode C. elegans: a platform for investigating biology.</title>
        <authorList>
            <consortium name="The C. elegans sequencing consortium"/>
        </authorList>
    </citation>
    <scope>NUCLEOTIDE SEQUENCE [LARGE SCALE GENOMIC DNA]</scope>
    <source>
        <strain evidence="12">Bristol N2</strain>
    </source>
</reference>
<reference evidence="9" key="3">
    <citation type="journal article" date="2011" name="J. Neurophysiol.">
        <title>Optogenetic analysis of GABAB receptor signaling in Caenorhabditis elegans motor neurons.</title>
        <authorList>
            <person name="Schultheis C."/>
            <person name="Brauner M."/>
            <person name="Liewald J.F."/>
            <person name="Gottschalk A."/>
        </authorList>
    </citation>
    <scope>DISRUPTION PHENOTYPE</scope>
</reference>
<reference evidence="9" key="4">
    <citation type="journal article" date="2015" name="Nat. Commun.">
        <title>Metabotropic GABA signalling modulates longevity in C. elegans.</title>
        <authorList>
            <person name="Chun L."/>
            <person name="Gong J."/>
            <person name="Yuan F."/>
            <person name="Zhang B."/>
            <person name="Liu H."/>
            <person name="Zheng T."/>
            <person name="Yu T."/>
            <person name="Xu X.Z."/>
            <person name="Liu J."/>
        </authorList>
    </citation>
    <scope>FUNCTION</scope>
    <scope>DISRUPTION PHENOTYPE</scope>
</reference>
<evidence type="ECO:0000250" key="1">
    <source>
        <dbReference type="UniProtKB" id="Q9UBS5"/>
    </source>
</evidence>
<evidence type="ECO:0000250" key="2">
    <source>
        <dbReference type="UniProtKB" id="Q9Z0U4"/>
    </source>
</evidence>
<evidence type="ECO:0000255" key="3"/>
<evidence type="ECO:0000255" key="4">
    <source>
        <dbReference type="PROSITE-ProRule" id="PRU00498"/>
    </source>
</evidence>
<evidence type="ECO:0000256" key="5">
    <source>
        <dbReference type="SAM" id="MobiDB-lite"/>
    </source>
</evidence>
<evidence type="ECO:0000269" key="6">
    <source>
    </source>
</evidence>
<evidence type="ECO:0000269" key="7">
    <source>
    </source>
</evidence>
<evidence type="ECO:0000269" key="8">
    <source>
    </source>
</evidence>
<evidence type="ECO:0000305" key="9"/>
<evidence type="ECO:0000305" key="10">
    <source>
    </source>
</evidence>
<evidence type="ECO:0000312" key="11">
    <source>
        <dbReference type="EMBL" id="ACE63490.1"/>
    </source>
</evidence>
<evidence type="ECO:0000312" key="12">
    <source>
        <dbReference type="Proteomes" id="UP000001940"/>
    </source>
</evidence>
<evidence type="ECO:0000312" key="13">
    <source>
        <dbReference type="WormBase" id="Y41G9A.4a"/>
    </source>
</evidence>
<evidence type="ECO:0000312" key="14">
    <source>
        <dbReference type="WormBase" id="Y41G9A.4b"/>
    </source>
</evidence>
<evidence type="ECO:0000312" key="15">
    <source>
        <dbReference type="WormBase" id="Y41G9A.4c"/>
    </source>
</evidence>
<evidence type="ECO:0000312" key="16">
    <source>
        <dbReference type="WormBase" id="Y41G9A.4e"/>
    </source>
</evidence>
<comment type="function">
    <text evidence="1 2 6 8">Component of a heterodimeric G-protein coupled receptor for GABA, formed by gbb-1 and gbb-2 (By similarity). Within the heterodimeric GABA receptor, only gbb-1 seems to bind agonists, while gbb-2 mediates coupling to G proteins (By similarity). Ligand binding causes a conformation change that triggers signaling via guanine nucleotide-binding proteins (G proteins) and modulates the activity of down-stream effectors, such as adenylate cyclase (By similarity). Signaling inhibits adenylate cyclase, stimulates phospholipase A2, activates potassium channels, inactivates voltage-dependent calcium-channels and modulates inositol phospholipid hydrolysis (By similarity). Calcium is required for high affinity binding to GABA (By similarity). Plays a critical role in the fine-tuning of inhibitory synaptic transmission (By similarity). Pre-synaptic GABA receptor inhibits neurotransmitter release by down-regulating high-voltage activated calcium channels, whereas postsynaptic GABA receptor decreases neuronal excitability by activating a prominent inwardly rectifying potassium (Kir) conductance that underlies the late inhibitory postsynaptic potentials (By similarity). Along with gbb-2, may couple to the G(o)-alpha G-protein goa-1 to negatively regulate cholinergic receptor activity in the presence of high levels of acetylcholine in ventral cord motor neurons (PubMed:18614679). As acetylcholine depolarizes body wall muscles, modulation of acetylcholine levels most likely results in the control of locomotory behavior (PubMed:18614679). Acts in neurons to regulate lifespan, and this may be through G-protein-egl-8/PLC-beta signaling to the transcription factor daf-16/FOXO (PubMed:26537867).</text>
</comment>
<comment type="subunit">
    <text evidence="10">May form a heterodimer with gbb-2.</text>
</comment>
<comment type="subcellular location">
    <subcellularLocation>
        <location evidence="1">Cell membrane</location>
        <topology evidence="3">Multi-pass membrane protein</topology>
    </subcellularLocation>
</comment>
<comment type="alternative products">
    <event type="alternative splicing"/>
    <isoform>
        <id>H2L0Q3-1</id>
        <name evidence="14">b</name>
        <sequence type="displayed"/>
    </isoform>
    <isoform>
        <id>H2L0Q3-2</id>
        <name evidence="13">a</name>
        <sequence type="described" ref="VSP_059101 VSP_059102"/>
    </isoform>
    <isoform>
        <id>H2L0Q3-3</id>
        <name evidence="15">c</name>
        <sequence type="described" ref="VSP_059103"/>
    </isoform>
    <isoform>
        <id>H2L0Q3-4</id>
        <name evidence="16">e</name>
        <sequence type="described" ref="VSP_059100"/>
    </isoform>
</comment>
<comment type="tissue specificity">
    <text evidence="6">Expressed in the nervous system, including cholinergic motor neurons, but not in GABAergic motor neurons or muscle.</text>
</comment>
<comment type="domain">
    <text evidence="1">Alpha-helical parts of the C-terminal intracellular region may mediate heterodimeric interaction with gbb-2.</text>
</comment>
<comment type="disruption phenotype">
    <text evidence="6 7 8">Increased lifespan (PubMed:26537867). Increased sensitivity to the acetylcholine esterase inhibitor Aldicarb, which results in accelerated paralysis likely due to enhanced acetylcholine release by ventral cord neurons and enhanced depolarization of muscles on one side of the body (PubMed:18614679). Double knockout with gbb-2 also results in increased sensitivity to Aldicarb and accelerated paralysis, but in addition results in irregular locomotory behavior characterized by increased speed of locomotion, decreased turning frequency, reduced rate of reversals, and an increased maximal distance covered in a 40 second interval (PubMed:18614679). Double knockout with the GABA(A) receptor unc-49 results in body elongation defects in response to induced GABA release of GABAergic motor neurons (PubMed:21613582).</text>
</comment>
<comment type="similarity">
    <text evidence="9">Belongs to the G-protein coupled receptor 3 family.</text>
</comment>
<feature type="signal peptide" evidence="3">
    <location>
        <begin position="1"/>
        <end position="19"/>
    </location>
</feature>
<feature type="chain" id="PRO_5005682875" description="Gamma-aminobutyric acid type B receptor subunit 1" evidence="9">
    <location>
        <begin position="20"/>
        <end position="899"/>
    </location>
</feature>
<feature type="topological domain" description="Extracellular" evidence="9">
    <location>
        <begin position="20"/>
        <end position="447"/>
    </location>
</feature>
<feature type="transmembrane region" description="Helical; Name=1" evidence="3">
    <location>
        <begin position="448"/>
        <end position="468"/>
    </location>
</feature>
<feature type="topological domain" description="Cytoplasmic" evidence="9">
    <location>
        <begin position="469"/>
        <end position="487"/>
    </location>
</feature>
<feature type="transmembrane region" description="Helical; Name=2" evidence="3">
    <location>
        <begin position="488"/>
        <end position="508"/>
    </location>
</feature>
<feature type="topological domain" description="Extracellular" evidence="9">
    <location>
        <begin position="509"/>
        <end position="525"/>
    </location>
</feature>
<feature type="transmembrane region" description="Helical; Name=3" evidence="3">
    <location>
        <begin position="526"/>
        <end position="546"/>
    </location>
</feature>
<feature type="topological domain" description="Cytoplasmic" evidence="9">
    <location>
        <begin position="547"/>
        <end position="616"/>
    </location>
</feature>
<feature type="transmembrane region" description="Helical; Name=4" evidence="3">
    <location>
        <begin position="617"/>
        <end position="637"/>
    </location>
</feature>
<feature type="topological domain" description="Extracellular" evidence="9">
    <location>
        <begin position="638"/>
        <end position="674"/>
    </location>
</feature>
<feature type="transmembrane region" description="Helical; Name=5" evidence="3">
    <location>
        <begin position="675"/>
        <end position="695"/>
    </location>
</feature>
<feature type="topological domain" description="Cytoplasmic" evidence="9">
    <location>
        <begin position="696"/>
        <end position="713"/>
    </location>
</feature>
<feature type="transmembrane region" description="Helical; Name=6" evidence="3">
    <location>
        <begin position="714"/>
        <end position="734"/>
    </location>
</feature>
<feature type="topological domain" description="Extracellular" evidence="9">
    <location>
        <begin position="735"/>
        <end position="741"/>
    </location>
</feature>
<feature type="transmembrane region" description="Helical; Name=7" evidence="3">
    <location>
        <begin position="742"/>
        <end position="762"/>
    </location>
</feature>
<feature type="topological domain" description="Cytoplasmic" evidence="9">
    <location>
        <begin position="763"/>
        <end position="899"/>
    </location>
</feature>
<feature type="region of interest" description="Disordered" evidence="5">
    <location>
        <begin position="870"/>
        <end position="899"/>
    </location>
</feature>
<feature type="coiled-coil region" evidence="3">
    <location>
        <begin position="791"/>
        <end position="842"/>
    </location>
</feature>
<feature type="compositionally biased region" description="Low complexity" evidence="5">
    <location>
        <begin position="890"/>
        <end position="899"/>
    </location>
</feature>
<feature type="glycosylation site" description="N-linked (GlcNAc...) asparagine" evidence="4">
    <location>
        <position position="69"/>
    </location>
</feature>
<feature type="glycosylation site" description="N-linked (GlcNAc...) asparagine" evidence="4">
    <location>
        <position position="266"/>
    </location>
</feature>
<feature type="glycosylation site" description="N-linked (GlcNAc...) asparagine" evidence="4">
    <location>
        <position position="339"/>
    </location>
</feature>
<feature type="glycosylation site" description="N-linked (GlcNAc...) asparagine" evidence="4">
    <location>
        <position position="353"/>
    </location>
</feature>
<feature type="glycosylation site" description="N-linked (GlcNAc...) asparagine" evidence="4">
    <location>
        <position position="371"/>
    </location>
</feature>
<feature type="splice variant" id="VSP_059100" description="In isoform e." evidence="9">
    <location>
        <begin position="1"/>
        <end position="680"/>
    </location>
</feature>
<feature type="splice variant" id="VSP_059101" description="In isoform a." evidence="9">
    <original>ARVTIL</original>
    <variation>VSQTFR</variation>
    <location>
        <begin position="524"/>
        <end position="529"/>
    </location>
</feature>
<feature type="splice variant" id="VSP_059102" description="In isoform a." evidence="9">
    <location>
        <begin position="530"/>
        <end position="899"/>
    </location>
</feature>
<feature type="splice variant" id="VSP_059103" description="In isoform c." evidence="9">
    <location>
        <begin position="566"/>
        <end position="609"/>
    </location>
</feature>
<keyword id="KW-0025">Alternative splicing</keyword>
<keyword id="KW-1003">Cell membrane</keyword>
<keyword id="KW-0175">Coiled coil</keyword>
<keyword id="KW-0297">G-protein coupled receptor</keyword>
<keyword id="KW-0325">Glycoprotein</keyword>
<keyword id="KW-0472">Membrane</keyword>
<keyword id="KW-0675">Receptor</keyword>
<keyword id="KW-1185">Reference proteome</keyword>
<keyword id="KW-0732">Signal</keyword>
<keyword id="KW-0807">Transducer</keyword>
<keyword id="KW-0812">Transmembrane</keyword>
<keyword id="KW-1133">Transmembrane helix</keyword>
<sequence>MFVRSSWLLLWGTIVWASAEPVTLHIGGTFPMESGSGGWAGGEACLPAVEMALKDVNSRLDILPGYVLNMTNHNSQCQPGLAMQQLYDFLYKPPTKLMLLTGCSPVTTVIAEAAPVWKLVVLSYGGSSPALSNRNRFPTLFRTHPSANMQNPTRIHIMEKFKWKRFTILMSVEEVFVTTAKDLEAIARKKGIKVDRQSFYGDPTDAMKTLQRQDARIIVGLFYVTEARKVLCQAYHHGLYGRRYVWFFIGWYADTWYIPPPEEHLNCTAEQMTEAAEYHFTTESVMLSRDNIPAISEMTGMQFQQRLTQYFQKDTANVGGFPEAPLAYDAVWALALAFNCTRNNLPSHIRLENFTYDNKVIADTLFQCVKNTSFRGVSGKVMFSDSGDRIARTQIEQMQGGKYKIMGYYDTTSGDLEWYNKEQWLNGKGPPPDSTVIKKHAMTVSNEFYYPTILFAVLGIAACVFIYLFTQKHHERLIIFQSQPECNNILLIGCSLCLFSLFLIGLPSDDISISESLFPLLCHARVTILLFGFTFAYGSMFAKVWIVHRMGATENQQLASRQKDEEENTPWEGIRTLISTMVGRQALMRKSSGQAYGALLEKRNTVLNQPISSSKFYVIVAALTAVDVFVCFVWVLIDPLHLTEQKFPLFTPADSEEDEMIMPVLQQCQSNQQEVWIGIIMGFKCLLLVFGTFLSYETRNLKLRFINDSRFVGLAIYNVAVMTLVTAPVVTLLIHGKVDANFAFISLTVLICTYISVGLIYGPKIRHIIKVPPSADEIQLNGNVGPGVMSKVDQKRYDMLKKENETLQIQIEEKERKIHECKERLEELTKNSETEDMNAQLLCENDKQIADENLTYSTATTLTTTIPLIDLQNGNHPGQIYENDNDDDGSSTSSDEILL</sequence>